<accession>Q6GP80</accession>
<gene>
    <name type="primary">nop16</name>
</gene>
<organism>
    <name type="scientific">Xenopus laevis</name>
    <name type="common">African clawed frog</name>
    <dbReference type="NCBI Taxonomy" id="8355"/>
    <lineage>
        <taxon>Eukaryota</taxon>
        <taxon>Metazoa</taxon>
        <taxon>Chordata</taxon>
        <taxon>Craniata</taxon>
        <taxon>Vertebrata</taxon>
        <taxon>Euteleostomi</taxon>
        <taxon>Amphibia</taxon>
        <taxon>Batrachia</taxon>
        <taxon>Anura</taxon>
        <taxon>Pipoidea</taxon>
        <taxon>Pipidae</taxon>
        <taxon>Xenopodinae</taxon>
        <taxon>Xenopus</taxon>
        <taxon>Xenopus</taxon>
    </lineage>
</organism>
<name>NOP16_XENLA</name>
<reference key="1">
    <citation type="submission" date="2004-06" db="EMBL/GenBank/DDBJ databases">
        <authorList>
            <consortium name="NIH - Xenopus Gene Collection (XGC) project"/>
        </authorList>
    </citation>
    <scope>NUCLEOTIDE SEQUENCE [LARGE SCALE MRNA]</scope>
    <source>
        <tissue>Spleen</tissue>
    </source>
</reference>
<sequence length="168" mass="19464">MGKVKKKRGNTFNYNVDRKKLKRKARKKHAPRIPCETIRNAWNDGKSVAKNLAEMGLAADPNKCLPVRPSKVKDAEEQHSNVIKKPYVLEGLQALASLPSKQTMGISSDMIHYVRHMVENYGEDYKAMARDEKNYYQDTPKQIQRKVNLYKRHHPQDFQAMITSHVMQ</sequence>
<comment type="subcellular location">
    <subcellularLocation>
        <location evidence="1">Nucleus</location>
        <location evidence="1">Nucleolus</location>
    </subcellularLocation>
</comment>
<comment type="similarity">
    <text evidence="2">Belongs to the NOP16 family.</text>
</comment>
<feature type="chain" id="PRO_0000250162" description="Nucleolar protein 16">
    <location>
        <begin position="1"/>
        <end position="168"/>
    </location>
</feature>
<protein>
    <recommendedName>
        <fullName>Nucleolar protein 16</fullName>
    </recommendedName>
</protein>
<proteinExistence type="evidence at transcript level"/>
<dbReference type="EMBL" id="BC073261">
    <property type="protein sequence ID" value="AAH73261.1"/>
    <property type="molecule type" value="mRNA"/>
</dbReference>
<dbReference type="RefSeq" id="NP_001085731.1">
    <property type="nucleotide sequence ID" value="NM_001092262.1"/>
</dbReference>
<dbReference type="SMR" id="Q6GP80"/>
<dbReference type="DNASU" id="444158"/>
<dbReference type="GeneID" id="444158"/>
<dbReference type="KEGG" id="xla:444158"/>
<dbReference type="AGR" id="Xenbase:XB-GENE-991044"/>
<dbReference type="CTD" id="444158"/>
<dbReference type="Xenbase" id="XB-GENE-991044">
    <property type="gene designation" value="nop16.S"/>
</dbReference>
<dbReference type="OMA" id="RESKYYP"/>
<dbReference type="OrthoDB" id="285729at2759"/>
<dbReference type="Proteomes" id="UP000186698">
    <property type="component" value="Chromosome 3S"/>
</dbReference>
<dbReference type="Bgee" id="444158">
    <property type="expression patterns" value="Expressed in neurula embryo and 19 other cell types or tissues"/>
</dbReference>
<dbReference type="GO" id="GO:0005730">
    <property type="term" value="C:nucleolus"/>
    <property type="evidence" value="ECO:0000318"/>
    <property type="project" value="GO_Central"/>
</dbReference>
<dbReference type="GO" id="GO:0042273">
    <property type="term" value="P:ribosomal large subunit biogenesis"/>
    <property type="evidence" value="ECO:0000318"/>
    <property type="project" value="GO_Central"/>
</dbReference>
<dbReference type="InterPro" id="IPR019002">
    <property type="entry name" value="Ribosome_biogenesis_Nop16"/>
</dbReference>
<dbReference type="PANTHER" id="PTHR13243">
    <property type="entry name" value="HSPC111 PROTEIN-RELATED"/>
    <property type="match status" value="1"/>
</dbReference>
<dbReference type="PANTHER" id="PTHR13243:SF1">
    <property type="entry name" value="NUCLEOLAR PROTEIN 16"/>
    <property type="match status" value="1"/>
</dbReference>
<dbReference type="Pfam" id="PF09420">
    <property type="entry name" value="Nop16"/>
    <property type="match status" value="1"/>
</dbReference>
<evidence type="ECO:0000250" key="1"/>
<evidence type="ECO:0000305" key="2"/>
<keyword id="KW-0539">Nucleus</keyword>
<keyword id="KW-1185">Reference proteome</keyword>